<feature type="chain" id="PRO_0000071227" description="Putative FNIP repeat-containing protein L170">
    <location>
        <begin position="1"/>
        <end position="442"/>
    </location>
</feature>
<feature type="repeat" description="FNIP 1">
    <location>
        <begin position="213"/>
        <end position="252"/>
    </location>
</feature>
<feature type="repeat" description="FNIP 2">
    <location>
        <begin position="253"/>
        <end position="294"/>
    </location>
</feature>
<feature type="repeat" description="FNIP 3">
    <location>
        <begin position="295"/>
        <end position="348"/>
    </location>
</feature>
<organism>
    <name type="scientific">Acanthamoeba polyphaga mimivirus</name>
    <name type="common">APMV</name>
    <dbReference type="NCBI Taxonomy" id="212035"/>
    <lineage>
        <taxon>Viruses</taxon>
        <taxon>Varidnaviria</taxon>
        <taxon>Bamfordvirae</taxon>
        <taxon>Nucleocytoviricota</taxon>
        <taxon>Megaviricetes</taxon>
        <taxon>Imitervirales</taxon>
        <taxon>Mimiviridae</taxon>
        <taxon>Megamimivirinae</taxon>
        <taxon>Mimivirus</taxon>
        <taxon>Mimivirus bradfordmassiliense</taxon>
    </lineage>
</organism>
<keyword id="KW-1185">Reference proteome</keyword>
<keyword id="KW-0677">Repeat</keyword>
<protein>
    <recommendedName>
        <fullName>Putative FNIP repeat-containing protein L170</fullName>
    </recommendedName>
</protein>
<name>YL170_MIMIV</name>
<proteinExistence type="predicted"/>
<organismHost>
    <name type="scientific">Acanthamoeba polyphaga</name>
    <name type="common">Amoeba</name>
    <dbReference type="NCBI Taxonomy" id="5757"/>
</organismHost>
<reference key="1">
    <citation type="journal article" date="2004" name="Science">
        <title>The 1.2-megabase genome sequence of Mimivirus.</title>
        <authorList>
            <person name="Raoult D."/>
            <person name="Audic S."/>
            <person name="Robert C."/>
            <person name="Abergel C."/>
            <person name="Renesto P."/>
            <person name="Ogata H."/>
            <person name="La Scola B."/>
            <person name="Susan M."/>
            <person name="Claverie J.-M."/>
        </authorList>
    </citation>
    <scope>NUCLEOTIDE SEQUENCE [LARGE SCALE GENOMIC DNA]</scope>
    <source>
        <strain>Rowbotham-Bradford</strain>
    </source>
</reference>
<sequence length="442" mass="51382">MNIINILDCDSILCILPNLPDADKIKFISCCRDLYKIKPIIKFDDYYHYANMDKLGMVNQCRNLIHIITDDNINQLTMKNIRYLKLYTQRQFIKHKLPINITKLEISRIFEQDIGPFIPDALEELILCDYDKPIRKFLPPTLKTLKFIHTHKNVIKHQIAPNVTNLALGDYDGSLGKWLPNNLKYLDVGKFFRGKIGLNIPTTVETLILGDLFNSSINSLRNNIRVLKLGNSFNKPIDILPELLEELYIGRGFNSEITYLPKRLIRLEFDNECIFDHPINVLPNSLRIFKLGCFFNQSIEKCLPNGLIKLKFGDYFNKPIQKTVFSGCLFKTKKFIPDSVRVLKFGMYFNQNVNGGLPIGITKIVLGSHYTRAIRKIPASAKHIQLEVGFRMASMQHWNNITHFKIYYSQYEYYKDVLPEHEIVNNKTKGLTNYKLIKIKKN</sequence>
<dbReference type="EMBL" id="AY653733">
    <property type="protein sequence ID" value="AAV50444.1"/>
    <property type="molecule type" value="Genomic_DNA"/>
</dbReference>
<dbReference type="SMR" id="Q5UPN0"/>
<dbReference type="KEGG" id="vg:9924770"/>
<dbReference type="Proteomes" id="UP000001134">
    <property type="component" value="Genome"/>
</dbReference>
<dbReference type="InterPro" id="IPR008615">
    <property type="entry name" value="FNIP"/>
</dbReference>
<dbReference type="InterPro" id="IPR051251">
    <property type="entry name" value="STK_FNIP-Repeat"/>
</dbReference>
<dbReference type="PANTHER" id="PTHR32134">
    <property type="entry name" value="FNIP REPEAT-CONTAINING PROTEIN"/>
    <property type="match status" value="1"/>
</dbReference>
<dbReference type="PANTHER" id="PTHR32134:SF92">
    <property type="entry name" value="FNIP REPEAT-CONTAINING PROTEIN"/>
    <property type="match status" value="1"/>
</dbReference>
<dbReference type="Pfam" id="PF05725">
    <property type="entry name" value="FNIP"/>
    <property type="match status" value="2"/>
</dbReference>
<dbReference type="SUPFAM" id="SSF52058">
    <property type="entry name" value="L domain-like"/>
    <property type="match status" value="1"/>
</dbReference>
<gene>
    <name type="ordered locus">MIMI_L170</name>
</gene>
<accession>Q5UPN0</accession>